<comment type="subcellular location">
    <subcellularLocation>
        <location evidence="4">Secreted</location>
    </subcellularLocation>
</comment>
<comment type="tissue specificity">
    <text evidence="4">Expressed by the venom gland.</text>
</comment>
<comment type="PTM">
    <text evidence="3">Contains 4 disulfide bonds.</text>
</comment>
<comment type="similarity">
    <text evidence="3">Belongs to the scoloptoxin-16 family.</text>
</comment>
<comment type="caution">
    <text evidence="4">All E.rubripes family members described in 'Undeheim et al., 2014' have not been imported into UniProtKB. Please, refer to this paper to access them.</text>
</comment>
<comment type="online information" name="National Center for Biotechnology Information (NCBI)">
    <link uri="https://www.ncbi.nlm.nih.gov/nuccore/GASI01000134"/>
</comment>
<dbReference type="GO" id="GO:0005576">
    <property type="term" value="C:extracellular region"/>
    <property type="evidence" value="ECO:0007669"/>
    <property type="project" value="UniProtKB-SubCell"/>
</dbReference>
<dbReference type="GO" id="GO:0090729">
    <property type="term" value="F:toxin activity"/>
    <property type="evidence" value="ECO:0007669"/>
    <property type="project" value="UniProtKB-KW"/>
</dbReference>
<dbReference type="InterPro" id="IPR029277">
    <property type="entry name" value="SVWC_dom"/>
</dbReference>
<dbReference type="Pfam" id="PF15430">
    <property type="entry name" value="SVWC"/>
    <property type="match status" value="1"/>
</dbReference>
<sequence length="146" mass="16339">MNTVSVVQFLAVGCAVFVLYGRGVFAAEGVKKAGQHKDAELCLGSDGLGHRLDEFWYNDDMCQRFLCFKDDEGIMYEQIANCPIAIAEGDCTLKPGTKGHYPDCCPAVECPPEDQKKRKFKRKCFLVNILTTLLTKLVKNLKKNQQ</sequence>
<organism>
    <name type="scientific">Ethmostigmus rubripes</name>
    <name type="common">Giant centipede</name>
    <dbReference type="NCBI Taxonomy" id="62613"/>
    <lineage>
        <taxon>Eukaryota</taxon>
        <taxon>Metazoa</taxon>
        <taxon>Ecdysozoa</taxon>
        <taxon>Arthropoda</taxon>
        <taxon>Myriapoda</taxon>
        <taxon>Chilopoda</taxon>
        <taxon>Pleurostigmophora</taxon>
        <taxon>Scolopendromorpha</taxon>
        <taxon>Scolopendridae</taxon>
        <taxon>Ethmostigmus</taxon>
    </lineage>
</organism>
<feature type="signal peptide" evidence="1">
    <location>
        <begin position="1"/>
        <end position="26"/>
    </location>
</feature>
<feature type="chain" id="PRO_0000446802" description="U-scoloptoxin(16)-Er1a" evidence="3">
    <location>
        <begin position="27"/>
        <end position="146"/>
    </location>
</feature>
<proteinExistence type="evidence at transcript level"/>
<reference key="1">
    <citation type="journal article" date="2014" name="Mol. Biol. Evol.">
        <title>Clawing through evolution: toxin diversification and convergence in the ancient lineage Chilopoda (centipedes).</title>
        <authorList>
            <person name="Undheim E.A."/>
            <person name="Jones A."/>
            <person name="Clauser K.R."/>
            <person name="Holland J.W."/>
            <person name="Pineda S.S."/>
            <person name="King G.F."/>
            <person name="Fry B.G."/>
        </authorList>
    </citation>
    <scope>NUCLEOTIDE SEQUENCE [MRNA]</scope>
    <scope>NOMENCLATURE</scope>
    <source>
        <tissue>Venom gland</tissue>
    </source>
</reference>
<keyword id="KW-1015">Disulfide bond</keyword>
<keyword id="KW-0964">Secreted</keyword>
<keyword id="KW-0732">Signal</keyword>
<keyword id="KW-0800">Toxin</keyword>
<evidence type="ECO:0000255" key="1"/>
<evidence type="ECO:0000303" key="2">
    <source>
    </source>
</evidence>
<evidence type="ECO:0000305" key="3"/>
<evidence type="ECO:0000305" key="4">
    <source>
    </source>
</evidence>
<protein>
    <recommendedName>
        <fullName evidence="2">U-scoloptoxin(16)-Er1a</fullName>
        <shortName evidence="2">U-SLPTX(16)-Er1a</shortName>
    </recommendedName>
</protein>
<name>TXG1A_ETHRU</name>
<accession>P0DQC4</accession>